<keyword id="KW-0067">ATP-binding</keyword>
<keyword id="KW-0114">cAMP</keyword>
<keyword id="KW-1003">Cell membrane</keyword>
<keyword id="KW-0963">Cytoplasm</keyword>
<keyword id="KW-0903">Direct protein sequencing</keyword>
<keyword id="KW-0418">Kinase</keyword>
<keyword id="KW-0449">Lipoprotein</keyword>
<keyword id="KW-0472">Membrane</keyword>
<keyword id="KW-0519">Myristate</keyword>
<keyword id="KW-0547">Nucleotide-binding</keyword>
<keyword id="KW-0539">Nucleus</keyword>
<keyword id="KW-0597">Phosphoprotein</keyword>
<keyword id="KW-1185">Reference proteome</keyword>
<keyword id="KW-0723">Serine/threonine-protein kinase</keyword>
<keyword id="KW-0808">Transferase</keyword>
<gene>
    <name type="primary">Prkacb</name>
    <name type="synonym">Pkacb</name>
</gene>
<evidence type="ECO:0000250" key="1"/>
<evidence type="ECO:0000250" key="2">
    <source>
        <dbReference type="UniProtKB" id="P05131"/>
    </source>
</evidence>
<evidence type="ECO:0000250" key="3">
    <source>
        <dbReference type="UniProtKB" id="P05132"/>
    </source>
</evidence>
<evidence type="ECO:0000250" key="4">
    <source>
        <dbReference type="UniProtKB" id="P22694"/>
    </source>
</evidence>
<evidence type="ECO:0000250" key="5">
    <source>
        <dbReference type="UniProtKB" id="P68181"/>
    </source>
</evidence>
<evidence type="ECO:0000255" key="6">
    <source>
        <dbReference type="PROSITE-ProRule" id="PRU00159"/>
    </source>
</evidence>
<evidence type="ECO:0000255" key="7">
    <source>
        <dbReference type="PROSITE-ProRule" id="PRU00618"/>
    </source>
</evidence>
<evidence type="ECO:0000255" key="8">
    <source>
        <dbReference type="PROSITE-ProRule" id="PRU10027"/>
    </source>
</evidence>
<evidence type="ECO:0000269" key="9">
    <source>
    </source>
</evidence>
<evidence type="ECO:0000305" key="10"/>
<evidence type="ECO:0007744" key="11">
    <source>
    </source>
</evidence>
<organism>
    <name type="scientific">Rattus norvegicus</name>
    <name type="common">Rat</name>
    <dbReference type="NCBI Taxonomy" id="10116"/>
    <lineage>
        <taxon>Eukaryota</taxon>
        <taxon>Metazoa</taxon>
        <taxon>Chordata</taxon>
        <taxon>Craniata</taxon>
        <taxon>Vertebrata</taxon>
        <taxon>Euteleostomi</taxon>
        <taxon>Mammalia</taxon>
        <taxon>Eutheria</taxon>
        <taxon>Euarchontoglires</taxon>
        <taxon>Glires</taxon>
        <taxon>Rodentia</taxon>
        <taxon>Myomorpha</taxon>
        <taxon>Muroidea</taxon>
        <taxon>Muridae</taxon>
        <taxon>Murinae</taxon>
        <taxon>Rattus</taxon>
    </lineage>
</organism>
<protein>
    <recommendedName>
        <fullName>cAMP-dependent protein kinase catalytic subunit beta</fullName>
        <shortName>PKA C-beta</shortName>
        <ecNumber>2.7.11.11</ecNumber>
    </recommendedName>
</protein>
<proteinExistence type="evidence at protein level"/>
<sequence length="351" mass="40708">MGNTAIAKKGSEVESVKEFLAKAKEDFLRKWENPPPSNAGLEDFERKKTLGTGSFGRVMLVKHKATEQYYAMKILDKQKVVKLKQIEHTLNEKRILQAVEFPFLVRLEYSFKDNSNLYMVMEYVPGGEMFSHLRRIGRFSEPHARFYAAQIVLTFEYLHSLDLIYRDLKPENLLIDHQGYIQVTDFGFAKRVKGRTWTLCGTPEYLAPEIILSKGYNKAVDWWALGVLIYEMAAGYPPFFADQPIQIYEKIVSGKVRFPSHFSSDLKDLLRNLLQVDLTKRFGNLKNGVSDIKTHKWFATTDWIAIYQRKVEAPFIPKFRGSGDTSNFDDYEEEEIRVSITEKCGKEFCEF</sequence>
<name>KAPCB_RAT</name>
<accession>P68182</accession>
<accession>P05206</accession>
<dbReference type="EC" id="2.7.11.11"/>
<dbReference type="EMBL" id="D10770">
    <property type="protein sequence ID" value="BAA01601.1"/>
    <property type="molecule type" value="mRNA"/>
</dbReference>
<dbReference type="PIR" id="JQ1139">
    <property type="entry name" value="OKRTCB"/>
</dbReference>
<dbReference type="RefSeq" id="NP_001071113.1">
    <property type="nucleotide sequence ID" value="NM_001077645.1"/>
</dbReference>
<dbReference type="SMR" id="P68182"/>
<dbReference type="BioGRID" id="254303">
    <property type="interactions" value="1"/>
</dbReference>
<dbReference type="FunCoup" id="P68182">
    <property type="interactions" value="4541"/>
</dbReference>
<dbReference type="IntAct" id="P68182">
    <property type="interactions" value="2"/>
</dbReference>
<dbReference type="MINT" id="P68182"/>
<dbReference type="STRING" id="10116.ENSRNOP00000062228"/>
<dbReference type="BindingDB" id="P68182"/>
<dbReference type="GuidetoPHARMACOLOGY" id="1477"/>
<dbReference type="GlyGen" id="P68182">
    <property type="glycosylation" value="1 site, 1 O-linked glycan (1 site)"/>
</dbReference>
<dbReference type="iPTMnet" id="P68182"/>
<dbReference type="PhosphoSitePlus" id="P68182"/>
<dbReference type="jPOST" id="P68182"/>
<dbReference type="PaxDb" id="10116-ENSRNOP00000062228"/>
<dbReference type="Ensembl" id="ENSRNOT00000068739.2">
    <property type="protein sequence ID" value="ENSRNOP00000062228.1"/>
    <property type="gene ID" value="ENSRNOG00000004978.7"/>
</dbReference>
<dbReference type="GeneID" id="293508"/>
<dbReference type="KEGG" id="rno:293508"/>
<dbReference type="AGR" id="RGD:1310574"/>
<dbReference type="CTD" id="5567"/>
<dbReference type="RGD" id="1310574">
    <property type="gene designation" value="Prkacb"/>
</dbReference>
<dbReference type="eggNOG" id="KOG0616">
    <property type="taxonomic scope" value="Eukaryota"/>
</dbReference>
<dbReference type="GeneTree" id="ENSGT00940000161169"/>
<dbReference type="HOGENOM" id="CLU_000288_63_5_1"/>
<dbReference type="InParanoid" id="P68182"/>
<dbReference type="OrthoDB" id="2156623at2759"/>
<dbReference type="PhylomeDB" id="P68182"/>
<dbReference type="Reactome" id="R-RNO-163615">
    <property type="pathway name" value="PKA activation"/>
</dbReference>
<dbReference type="Reactome" id="R-RNO-164378">
    <property type="pathway name" value="PKA activation in glucagon signalling"/>
</dbReference>
<dbReference type="Reactome" id="R-RNO-180024">
    <property type="pathway name" value="DARPP-32 events"/>
</dbReference>
<dbReference type="Reactome" id="R-RNO-381676">
    <property type="pathway name" value="Glucagon-like Peptide-1 (GLP1) regulates insulin secretion"/>
</dbReference>
<dbReference type="Reactome" id="R-RNO-392517">
    <property type="pathway name" value="Rap1 signalling"/>
</dbReference>
<dbReference type="Reactome" id="R-RNO-422356">
    <property type="pathway name" value="Regulation of insulin secretion"/>
</dbReference>
<dbReference type="Reactome" id="R-RNO-432040">
    <property type="pathway name" value="Vasopressin regulates renal water homeostasis via Aquaporins"/>
</dbReference>
<dbReference type="Reactome" id="R-RNO-4420097">
    <property type="pathway name" value="VEGFA-VEGFR2 Pathway"/>
</dbReference>
<dbReference type="Reactome" id="R-RNO-442720">
    <property type="pathway name" value="CREB1 phosphorylation through the activation of Adenylate Cyclase"/>
</dbReference>
<dbReference type="Reactome" id="R-RNO-5610785">
    <property type="pathway name" value="GLI3 is processed to GLI3R by the proteasome"/>
</dbReference>
<dbReference type="Reactome" id="R-RNO-5610787">
    <property type="pathway name" value="Hedgehog 'off' state"/>
</dbReference>
<dbReference type="Reactome" id="R-RNO-5687128">
    <property type="pathway name" value="MAPK6/MAPK4 signaling"/>
</dbReference>
<dbReference type="Reactome" id="R-RNO-8853659">
    <property type="pathway name" value="RET signaling"/>
</dbReference>
<dbReference type="Reactome" id="R-RNO-8963896">
    <property type="pathway name" value="HDL assembly"/>
</dbReference>
<dbReference type="Reactome" id="R-RNO-9634597">
    <property type="pathway name" value="GPER1 signaling"/>
</dbReference>
<dbReference type="Reactome" id="R-RNO-983231">
    <property type="pathway name" value="Factors involved in megakaryocyte development and platelet production"/>
</dbReference>
<dbReference type="Reactome" id="R-RNO-9856530">
    <property type="pathway name" value="High laminar flow shear stress activates signaling by PIEZO1 and PECAM1:CDH5:KDR in endothelial cells"/>
</dbReference>
<dbReference type="PRO" id="PR:P68182"/>
<dbReference type="Proteomes" id="UP000002494">
    <property type="component" value="Chromosome 2"/>
</dbReference>
<dbReference type="Bgee" id="ENSRNOG00000004978">
    <property type="expression patterns" value="Expressed in frontal cortex and 18 other cell types or tissues"/>
</dbReference>
<dbReference type="GO" id="GO:0005952">
    <property type="term" value="C:cAMP-dependent protein kinase complex"/>
    <property type="evidence" value="ECO:0000314"/>
    <property type="project" value="RGD"/>
</dbReference>
<dbReference type="GO" id="GO:0005813">
    <property type="term" value="C:centrosome"/>
    <property type="evidence" value="ECO:0000266"/>
    <property type="project" value="RGD"/>
</dbReference>
<dbReference type="GO" id="GO:0097546">
    <property type="term" value="C:ciliary base"/>
    <property type="evidence" value="ECO:0000266"/>
    <property type="project" value="RGD"/>
</dbReference>
<dbReference type="GO" id="GO:0005829">
    <property type="term" value="C:cytosol"/>
    <property type="evidence" value="ECO:0000318"/>
    <property type="project" value="GO_Central"/>
</dbReference>
<dbReference type="GO" id="GO:0005634">
    <property type="term" value="C:nucleus"/>
    <property type="evidence" value="ECO:0000318"/>
    <property type="project" value="GO_Central"/>
</dbReference>
<dbReference type="GO" id="GO:0048471">
    <property type="term" value="C:perinuclear region of cytoplasm"/>
    <property type="evidence" value="ECO:0000314"/>
    <property type="project" value="RGD"/>
</dbReference>
<dbReference type="GO" id="GO:0005886">
    <property type="term" value="C:plasma membrane"/>
    <property type="evidence" value="ECO:0007669"/>
    <property type="project" value="UniProtKB-SubCell"/>
</dbReference>
<dbReference type="GO" id="GO:0005524">
    <property type="term" value="F:ATP binding"/>
    <property type="evidence" value="ECO:0000250"/>
    <property type="project" value="UniProtKB"/>
</dbReference>
<dbReference type="GO" id="GO:0004691">
    <property type="term" value="F:cAMP-dependent protein kinase activity"/>
    <property type="evidence" value="ECO:0000314"/>
    <property type="project" value="RGD"/>
</dbReference>
<dbReference type="GO" id="GO:0000287">
    <property type="term" value="F:magnesium ion binding"/>
    <property type="evidence" value="ECO:0000250"/>
    <property type="project" value="UniProtKB"/>
</dbReference>
<dbReference type="GO" id="GO:0034237">
    <property type="term" value="F:protein kinase A regulatory subunit binding"/>
    <property type="evidence" value="ECO:0000305"/>
    <property type="project" value="RGD"/>
</dbReference>
<dbReference type="GO" id="GO:0106310">
    <property type="term" value="F:protein serine kinase activity"/>
    <property type="evidence" value="ECO:0007669"/>
    <property type="project" value="RHEA"/>
</dbReference>
<dbReference type="GO" id="GO:0004674">
    <property type="term" value="F:protein serine/threonine kinase activity"/>
    <property type="evidence" value="ECO:0000304"/>
    <property type="project" value="Reactome"/>
</dbReference>
<dbReference type="GO" id="GO:0031625">
    <property type="term" value="F:ubiquitin protein ligase binding"/>
    <property type="evidence" value="ECO:0000266"/>
    <property type="project" value="RGD"/>
</dbReference>
<dbReference type="GO" id="GO:0051447">
    <property type="term" value="P:negative regulation of meiotic cell cycle"/>
    <property type="evidence" value="ECO:0000314"/>
    <property type="project" value="RGD"/>
</dbReference>
<dbReference type="GO" id="GO:0045879">
    <property type="term" value="P:negative regulation of smoothened signaling pathway"/>
    <property type="evidence" value="ECO:0000266"/>
    <property type="project" value="RGD"/>
</dbReference>
<dbReference type="GO" id="GO:1904262">
    <property type="term" value="P:negative regulation of TORC1 signaling"/>
    <property type="evidence" value="ECO:0000250"/>
    <property type="project" value="UniProtKB"/>
</dbReference>
<dbReference type="GO" id="GO:0001843">
    <property type="term" value="P:neural tube closure"/>
    <property type="evidence" value="ECO:0000266"/>
    <property type="project" value="RGD"/>
</dbReference>
<dbReference type="GO" id="GO:0006468">
    <property type="term" value="P:protein phosphorylation"/>
    <property type="evidence" value="ECO:0000250"/>
    <property type="project" value="UniProtKB"/>
</dbReference>
<dbReference type="GO" id="GO:0070613">
    <property type="term" value="P:regulation of protein processing"/>
    <property type="evidence" value="ECO:0000266"/>
    <property type="project" value="RGD"/>
</dbReference>
<dbReference type="GO" id="GO:0007165">
    <property type="term" value="P:signal transduction"/>
    <property type="evidence" value="ECO:0000318"/>
    <property type="project" value="GO_Central"/>
</dbReference>
<dbReference type="CDD" id="cd14209">
    <property type="entry name" value="STKc_PKA"/>
    <property type="match status" value="1"/>
</dbReference>
<dbReference type="FunFam" id="3.30.200.20:FF:000005">
    <property type="entry name" value="cAMP-dependent protein kinase catalytic subunit"/>
    <property type="match status" value="1"/>
</dbReference>
<dbReference type="FunFam" id="1.10.510.10:FF:000005">
    <property type="entry name" value="cAMP-dependent protein kinase catalytic subunit alpha"/>
    <property type="match status" value="1"/>
</dbReference>
<dbReference type="Gene3D" id="3.30.200.20">
    <property type="entry name" value="Phosphorylase Kinase, domain 1"/>
    <property type="match status" value="1"/>
</dbReference>
<dbReference type="Gene3D" id="1.10.510.10">
    <property type="entry name" value="Transferase(Phosphotransferase) domain 1"/>
    <property type="match status" value="1"/>
</dbReference>
<dbReference type="InterPro" id="IPR000961">
    <property type="entry name" value="AGC-kinase_C"/>
</dbReference>
<dbReference type="InterPro" id="IPR011009">
    <property type="entry name" value="Kinase-like_dom_sf"/>
</dbReference>
<dbReference type="InterPro" id="IPR000719">
    <property type="entry name" value="Prot_kinase_dom"/>
</dbReference>
<dbReference type="InterPro" id="IPR017441">
    <property type="entry name" value="Protein_kinase_ATP_BS"/>
</dbReference>
<dbReference type="InterPro" id="IPR008271">
    <property type="entry name" value="Ser/Thr_kinase_AS"/>
</dbReference>
<dbReference type="InterPro" id="IPR044109">
    <property type="entry name" value="STKc_PKA"/>
</dbReference>
<dbReference type="PANTHER" id="PTHR24353:SF150">
    <property type="entry name" value="CAMP-DEPENDENT PROTEIN KINASE CATALYTIC SUBUNIT BETA"/>
    <property type="match status" value="1"/>
</dbReference>
<dbReference type="PANTHER" id="PTHR24353">
    <property type="entry name" value="CYCLIC NUCLEOTIDE-DEPENDENT PROTEIN KINASE"/>
    <property type="match status" value="1"/>
</dbReference>
<dbReference type="Pfam" id="PF00069">
    <property type="entry name" value="Pkinase"/>
    <property type="match status" value="1"/>
</dbReference>
<dbReference type="SMART" id="SM00133">
    <property type="entry name" value="S_TK_X"/>
    <property type="match status" value="1"/>
</dbReference>
<dbReference type="SMART" id="SM00220">
    <property type="entry name" value="S_TKc"/>
    <property type="match status" value="1"/>
</dbReference>
<dbReference type="SUPFAM" id="SSF56112">
    <property type="entry name" value="Protein kinase-like (PK-like)"/>
    <property type="match status" value="1"/>
</dbReference>
<dbReference type="PROSITE" id="PS51285">
    <property type="entry name" value="AGC_KINASE_CTER"/>
    <property type="match status" value="1"/>
</dbReference>
<dbReference type="PROSITE" id="PS00107">
    <property type="entry name" value="PROTEIN_KINASE_ATP"/>
    <property type="match status" value="1"/>
</dbReference>
<dbReference type="PROSITE" id="PS50011">
    <property type="entry name" value="PROTEIN_KINASE_DOM"/>
    <property type="match status" value="1"/>
</dbReference>
<dbReference type="PROSITE" id="PS00108">
    <property type="entry name" value="PROTEIN_KINASE_ST"/>
    <property type="match status" value="1"/>
</dbReference>
<feature type="initiator methionine" description="Removed" evidence="9">
    <location>
        <position position="1"/>
    </location>
</feature>
<feature type="chain" id="PRO_0000086063" description="cAMP-dependent protein kinase catalytic subunit beta">
    <location>
        <begin position="2"/>
        <end position="351"/>
    </location>
</feature>
<feature type="domain" description="Protein kinase" evidence="6">
    <location>
        <begin position="44"/>
        <end position="298"/>
    </location>
</feature>
<feature type="domain" description="AGC-kinase C-terminal" evidence="7">
    <location>
        <begin position="299"/>
        <end position="351"/>
    </location>
</feature>
<feature type="active site" description="Proton acceptor" evidence="6 8">
    <location>
        <position position="167"/>
    </location>
</feature>
<feature type="binding site" evidence="6">
    <location>
        <begin position="50"/>
        <end position="58"/>
    </location>
    <ligand>
        <name>ATP</name>
        <dbReference type="ChEBI" id="CHEBI:30616"/>
    </ligand>
</feature>
<feature type="binding site" evidence="6">
    <location>
        <position position="73"/>
    </location>
    <ligand>
        <name>ATP</name>
        <dbReference type="ChEBI" id="CHEBI:30616"/>
    </ligand>
</feature>
<feature type="modified residue" description="Deamidated asparagine" evidence="9">
    <location>
        <position position="3"/>
    </location>
</feature>
<feature type="modified residue" description="Phosphoserine" evidence="3">
    <location>
        <position position="11"/>
    </location>
</feature>
<feature type="modified residue" description="Phosphotyrosine" evidence="5">
    <location>
        <position position="69"/>
    </location>
</feature>
<feature type="modified residue" description="Phosphoserine" evidence="3">
    <location>
        <position position="140"/>
    </location>
</feature>
<feature type="modified residue" description="Phosphothreonine" evidence="3">
    <location>
        <position position="198"/>
    </location>
</feature>
<feature type="modified residue" description="Phosphoserine" evidence="11">
    <location>
        <position position="322"/>
    </location>
</feature>
<feature type="modified residue" description="Phosphotyrosine" evidence="3">
    <location>
        <position position="331"/>
    </location>
</feature>
<feature type="modified residue" description="Phosphoserine" evidence="11">
    <location>
        <position position="339"/>
    </location>
</feature>
<feature type="lipid moiety-binding region" description="N-myristoyl glycine" evidence="4">
    <location>
        <position position="2"/>
    </location>
</feature>
<reference key="1">
    <citation type="journal article" date="1992" name="Biochim. Biophys. Acta">
        <title>Molecular structure of the C beta catalytic subunit of rat cAMP-dependent protein kinase and differential expression of C alpha and C beta isoforms in rat tissues and cultured cells.</title>
        <authorList>
            <person name="Shuntoh H."/>
            <person name="Sakamoto N."/>
            <person name="Matsuyama S."/>
            <person name="Saitoh M."/>
            <person name="Tanaka C."/>
        </authorList>
    </citation>
    <scope>NUCLEOTIDE SEQUENCE [MRNA]</scope>
    <source>
        <tissue>Brain</tissue>
    </source>
</reference>
<reference key="2">
    <citation type="journal article" date="1998" name="Protein Sci.">
        <title>A conserved deamidation site at Asn 2 in the catalytic subunit of mammalian cAMP-dependent protein kinase detected by capillary LC-MS and tandem mass spectrometry.</title>
        <authorList>
            <person name="Jedrzejewski P.T."/>
            <person name="Girod A."/>
            <person name="Tholey A."/>
            <person name="Koenig N."/>
            <person name="Thullner S."/>
            <person name="Kinzel V."/>
            <person name="Bossemeyer D."/>
        </authorList>
    </citation>
    <scope>PROTEIN SEQUENCE OF 2-8</scope>
    <scope>DEAMIDATION AT ASN-3</scope>
</reference>
<reference key="3">
    <citation type="journal article" date="2012" name="Nat. Commun.">
        <title>Quantitative maps of protein phosphorylation sites across 14 different rat organs and tissues.</title>
        <authorList>
            <person name="Lundby A."/>
            <person name="Secher A."/>
            <person name="Lage K."/>
            <person name="Nordsborg N.B."/>
            <person name="Dmytriyev A."/>
            <person name="Lundby C."/>
            <person name="Olsen J.V."/>
        </authorList>
    </citation>
    <scope>PHOSPHORYLATION [LARGE SCALE ANALYSIS] AT SER-322 AND SER-339</scope>
    <scope>IDENTIFICATION BY MASS SPECTROMETRY [LARGE SCALE ANALYSIS]</scope>
</reference>
<comment type="function">
    <text evidence="4">Mediates cAMP-dependent signaling triggered by receptor binding to GPCRs. PKA activation regulates diverse cellular processes such as cell proliferation, the cell cycle, differentiation and regulation of microtubule dynamics, chromatin condensation and decondensation, nuclear envelope disassembly and reassembly, as well as regulation of intracellular transport mechanisms and ion flux. Regulates the abundance of compartmentalized pools of its regulatory subunits through phosphorylation of PJA2 which binds and ubiquitinates these subunits, leading to their subsequent proteolysis. Phosphorylates GPKOW which regulates its ability to bind RNA. Acts as a negative regulator of mTORC1 by mediating phosphorylation of RPTOR.</text>
</comment>
<comment type="catalytic activity">
    <reaction>
        <text>L-seryl-[protein] + ATP = O-phospho-L-seryl-[protein] + ADP + H(+)</text>
        <dbReference type="Rhea" id="RHEA:17989"/>
        <dbReference type="Rhea" id="RHEA-COMP:9863"/>
        <dbReference type="Rhea" id="RHEA-COMP:11604"/>
        <dbReference type="ChEBI" id="CHEBI:15378"/>
        <dbReference type="ChEBI" id="CHEBI:29999"/>
        <dbReference type="ChEBI" id="CHEBI:30616"/>
        <dbReference type="ChEBI" id="CHEBI:83421"/>
        <dbReference type="ChEBI" id="CHEBI:456216"/>
        <dbReference type="EC" id="2.7.11.11"/>
    </reaction>
</comment>
<comment type="catalytic activity">
    <reaction>
        <text>L-threonyl-[protein] + ATP = O-phospho-L-threonyl-[protein] + ADP + H(+)</text>
        <dbReference type="Rhea" id="RHEA:46608"/>
        <dbReference type="Rhea" id="RHEA-COMP:11060"/>
        <dbReference type="Rhea" id="RHEA-COMP:11605"/>
        <dbReference type="ChEBI" id="CHEBI:15378"/>
        <dbReference type="ChEBI" id="CHEBI:30013"/>
        <dbReference type="ChEBI" id="CHEBI:30616"/>
        <dbReference type="ChEBI" id="CHEBI:61977"/>
        <dbReference type="ChEBI" id="CHEBI:456216"/>
        <dbReference type="EC" id="2.7.11.11"/>
    </reaction>
</comment>
<comment type="cofactor">
    <cofactor evidence="1">
        <name>Mg(2+)</name>
        <dbReference type="ChEBI" id="CHEBI:18420"/>
    </cofactor>
</comment>
<comment type="activity regulation">
    <text evidence="4">Activated by cAMP.</text>
</comment>
<comment type="subunit">
    <text evidence="3 4">A number of inactive tetrameric holoenzymes are produced by the combination of homo- or heterodimers of the different regulatory subunits associated with two catalytic subunits. cAMP causes the dissociation of the inactive holoenzyme into a dimer of regulatory subunits bound to four cAMP and two free monomeric catalytic subunits. Interacts with PRKAR1A and PRKAR2B (By similarity). The cAMP-dependent protein kinase catalytic subunit binds PJA2. Interacts with GPKOW.</text>
</comment>
<comment type="subcellular location">
    <subcellularLocation>
        <location evidence="4">Cytoplasm</location>
    </subcellularLocation>
    <subcellularLocation>
        <location evidence="4">Cell membrane</location>
    </subcellularLocation>
    <subcellularLocation>
        <location evidence="4">Membrane</location>
        <topology evidence="4">Lipid-anchor</topology>
    </subcellularLocation>
    <subcellularLocation>
        <location evidence="2">Nucleus</location>
    </subcellularLocation>
    <text evidence="2">Translocates into the nucleus (monomeric catalytic subunit). The inactive holoenzyme is found in the cytoplasm.</text>
</comment>
<comment type="PTM">
    <text evidence="9">Asn-3 is deaminated to Asp in more than 25% of the proteins, giving rise to 2 major isoelectric variants, called CB and CA respectively (0.4 pH unit change). Deamidation proceeds via the so-called beta-aspartyl shift mechanism and yields either 'D-Asp-2' (major) or 'D-isoAsp-2' (minor), in addition to L-isomers. Deamidation occurs after the addition of myristate. The Asn-3 form reaches a significantly larger nuclear/cytoplasmic ratio than the 'Asp-2' form.</text>
</comment>
<comment type="similarity">
    <text evidence="10">Belongs to the protein kinase superfamily. AGC Ser/Thr protein kinase family. cAMP subfamily.</text>
</comment>